<reference key="1">
    <citation type="journal article" date="2012" name="PLoS ONE">
        <title>Characterization of profilin polymorphism in pollen with a focus on multifunctionality.</title>
        <authorList>
            <person name="Jimenez-Lopez J.C."/>
            <person name="Morales S."/>
            <person name="Castro A.J."/>
            <person name="Volkmann D."/>
            <person name="Rodriguez-Garcia M.I."/>
            <person name="Alche Jde D."/>
        </authorList>
    </citation>
    <scope>NUCLEOTIDE SEQUENCE [MRNA]</scope>
    <scope>POLYMORPHISM</scope>
    <source>
        <strain>cv. Farga</strain>
        <tissue>Pollen</tissue>
    </source>
</reference>
<reference key="2">
    <citation type="journal article" date="2013" name="PLoS ONE">
        <title>Analysis of the effects of polymorphism on pollen profilin structural functionality and the generation of conformational, T- and B-cell epitopes.</title>
        <authorList>
            <person name="Jimenez-Lopez J.C."/>
            <person name="Rodriguez-Garcia M.I."/>
            <person name="Alche J.D."/>
        </authorList>
    </citation>
    <scope>3D-STRUCTURE MODELING</scope>
    <scope>DISULFIDE BOND</scope>
</reference>
<accession>A4GE44</accession>
<keyword id="KW-0009">Actin-binding</keyword>
<keyword id="KW-0020">Allergen</keyword>
<keyword id="KW-0963">Cytoplasm</keyword>
<keyword id="KW-0206">Cytoskeleton</keyword>
<keyword id="KW-1015">Disulfide bond</keyword>
<keyword id="KW-0597">Phosphoprotein</keyword>
<feature type="initiator methionine" description="Removed" evidence="1">
    <location>
        <position position="1"/>
    </location>
</feature>
<feature type="chain" id="PRO_0000425035" description="Profilin-2">
    <location>
        <begin position="2"/>
        <end position="134"/>
    </location>
</feature>
<feature type="short sequence motif" description="Involved in PIP2 interaction">
    <location>
        <begin position="84"/>
        <end position="100"/>
    </location>
</feature>
<feature type="modified residue" description="Phosphothreonine" evidence="1">
    <location>
        <position position="114"/>
    </location>
</feature>
<feature type="disulfide bond" evidence="3">
    <location>
        <begin position="13"/>
        <end position="118"/>
    </location>
</feature>
<comment type="function">
    <text evidence="1">Binds to actin and affects the structure of the cytoskeleton. At high concentrations, profilin prevents the polymerization of actin, whereas it enhances it at low concentrations (By similarity).</text>
</comment>
<comment type="subunit">
    <text evidence="1">Occurs in many kinds of cells as a complex with monomeric actin in a 1:1 ratio.</text>
</comment>
<comment type="subcellular location">
    <subcellularLocation>
        <location evidence="1">Cytoplasm</location>
        <location evidence="1">Cytoskeleton</location>
    </subcellularLocation>
</comment>
<comment type="PTM">
    <text evidence="1">Phosphorylated by MAP kinases.</text>
</comment>
<comment type="polymorphism">
    <text>Several isoforms of the allergen exist due to polymorphism.</text>
</comment>
<comment type="allergen">
    <text>Causes an allergic reaction in human.</text>
</comment>
<comment type="miscellaneous">
    <text evidence="3">The variability of the residues taking part of IgE-binding epitopes might be responsible of the difference in cross-reactivity among olive pollen cultivars, and between distantly related pollen species, leading to a variable range of allergy reactions among atopic patients.</text>
</comment>
<comment type="similarity">
    <text evidence="2">Belongs to the profilin family.</text>
</comment>
<name>PROBR_OLEEU</name>
<evidence type="ECO:0000250" key="1"/>
<evidence type="ECO:0000305" key="2"/>
<evidence type="ECO:0000305" key="3">
    <source>
    </source>
</evidence>
<proteinExistence type="evidence at protein level"/>
<protein>
    <recommendedName>
        <fullName>Profilin-2</fullName>
    </recommendedName>
    <alternativeName>
        <fullName>Pollen allergen Ole e 2</fullName>
    </alternativeName>
    <allergenName>Ole e 2</allergenName>
</protein>
<dbReference type="EMBL" id="DQ317569">
    <property type="protein sequence ID" value="ABC47412.1"/>
    <property type="molecule type" value="mRNA"/>
</dbReference>
<dbReference type="SMR" id="A4GE44"/>
<dbReference type="Allergome" id="490">
    <property type="allergen name" value="Ole e 2"/>
</dbReference>
<dbReference type="GO" id="GO:0005938">
    <property type="term" value="C:cell cortex"/>
    <property type="evidence" value="ECO:0007669"/>
    <property type="project" value="TreeGrafter"/>
</dbReference>
<dbReference type="GO" id="GO:0005856">
    <property type="term" value="C:cytoskeleton"/>
    <property type="evidence" value="ECO:0007669"/>
    <property type="project" value="UniProtKB-SubCell"/>
</dbReference>
<dbReference type="GO" id="GO:0003785">
    <property type="term" value="F:actin monomer binding"/>
    <property type="evidence" value="ECO:0007669"/>
    <property type="project" value="TreeGrafter"/>
</dbReference>
<dbReference type="CDD" id="cd00148">
    <property type="entry name" value="PROF"/>
    <property type="match status" value="1"/>
</dbReference>
<dbReference type="FunFam" id="3.30.450.30:FF:000001">
    <property type="entry name" value="Profilin"/>
    <property type="match status" value="1"/>
</dbReference>
<dbReference type="Gene3D" id="3.30.450.30">
    <property type="entry name" value="Dynein light chain 2a, cytoplasmic"/>
    <property type="match status" value="1"/>
</dbReference>
<dbReference type="InterPro" id="IPR048278">
    <property type="entry name" value="PFN"/>
</dbReference>
<dbReference type="InterPro" id="IPR005455">
    <property type="entry name" value="PFN_euk"/>
</dbReference>
<dbReference type="InterPro" id="IPR036140">
    <property type="entry name" value="PFN_sf"/>
</dbReference>
<dbReference type="InterPro" id="IPR027310">
    <property type="entry name" value="Profilin_CS"/>
</dbReference>
<dbReference type="PANTHER" id="PTHR11604">
    <property type="entry name" value="PROFILIN"/>
    <property type="match status" value="1"/>
</dbReference>
<dbReference type="PANTHER" id="PTHR11604:SF25">
    <property type="entry name" value="PROFILIN-5"/>
    <property type="match status" value="1"/>
</dbReference>
<dbReference type="Pfam" id="PF00235">
    <property type="entry name" value="Profilin"/>
    <property type="match status" value="1"/>
</dbReference>
<dbReference type="PRINTS" id="PR00392">
    <property type="entry name" value="PROFILIN"/>
</dbReference>
<dbReference type="PRINTS" id="PR01640">
    <property type="entry name" value="PROFILINPLNT"/>
</dbReference>
<dbReference type="SMART" id="SM00392">
    <property type="entry name" value="PROF"/>
    <property type="match status" value="1"/>
</dbReference>
<dbReference type="SUPFAM" id="SSF55770">
    <property type="entry name" value="Profilin (actin-binding protein)"/>
    <property type="match status" value="1"/>
</dbReference>
<dbReference type="PROSITE" id="PS00414">
    <property type="entry name" value="PROFILIN"/>
    <property type="match status" value="1"/>
</dbReference>
<organism>
    <name type="scientific">Olea europaea</name>
    <name type="common">Common olive</name>
    <dbReference type="NCBI Taxonomy" id="4146"/>
    <lineage>
        <taxon>Eukaryota</taxon>
        <taxon>Viridiplantae</taxon>
        <taxon>Streptophyta</taxon>
        <taxon>Embryophyta</taxon>
        <taxon>Tracheophyta</taxon>
        <taxon>Spermatophyta</taxon>
        <taxon>Magnoliopsida</taxon>
        <taxon>eudicotyledons</taxon>
        <taxon>Gunneridae</taxon>
        <taxon>Pentapetalae</taxon>
        <taxon>asterids</taxon>
        <taxon>lamiids</taxon>
        <taxon>Lamiales</taxon>
        <taxon>Oleaceae</taxon>
        <taxon>Oleeae</taxon>
        <taxon>Olea</taxon>
    </lineage>
</organism>
<sequence>MSWQAYVDDHLMCDIEGHEGHRLTAAAIVGHDGSVWAQSATFPQFKPEEMNGIMTDFNEPGHLAPTGLHLGGTKYMVIQGEAGAVIRGKKGSGGITIKKTGQALVFGIYEEPVTPGQCNMVVERLGDYLIEQGL</sequence>